<protein>
    <recommendedName>
        <fullName>Kinesin light chain 3</fullName>
    </recommendedName>
</protein>
<accession>Q91W40</accession>
<accession>Q3TZ56</accession>
<dbReference type="EMBL" id="AK158094">
    <property type="protein sequence ID" value="BAE34354.1"/>
    <property type="molecule type" value="mRNA"/>
</dbReference>
<dbReference type="EMBL" id="BC017147">
    <property type="protein sequence ID" value="AAH17147.1"/>
    <property type="molecule type" value="mRNA"/>
</dbReference>
<dbReference type="CCDS" id="CCDS20901.1"/>
<dbReference type="RefSeq" id="NP_001272967.1">
    <property type="nucleotide sequence ID" value="NM_001286038.2"/>
</dbReference>
<dbReference type="RefSeq" id="NP_001272968.1">
    <property type="nucleotide sequence ID" value="NM_001286039.2"/>
</dbReference>
<dbReference type="RefSeq" id="NP_666294.1">
    <property type="nucleotide sequence ID" value="NM_146182.5"/>
</dbReference>
<dbReference type="SMR" id="Q91W40"/>
<dbReference type="BioGRID" id="231327">
    <property type="interactions" value="19"/>
</dbReference>
<dbReference type="DIP" id="DIP-48703N"/>
<dbReference type="FunCoup" id="Q91W40">
    <property type="interactions" value="4"/>
</dbReference>
<dbReference type="IntAct" id="Q91W40">
    <property type="interactions" value="17"/>
</dbReference>
<dbReference type="STRING" id="10090.ENSMUSP00000038091"/>
<dbReference type="iPTMnet" id="Q91W40"/>
<dbReference type="PhosphoSitePlus" id="Q91W40"/>
<dbReference type="jPOST" id="Q91W40"/>
<dbReference type="PaxDb" id="10090-ENSMUSP00000104099"/>
<dbReference type="ProteomicsDB" id="263447"/>
<dbReference type="Pumba" id="Q91W40"/>
<dbReference type="Antibodypedia" id="31299">
    <property type="antibodies" value="143 antibodies from 22 providers"/>
</dbReference>
<dbReference type="DNASU" id="232943"/>
<dbReference type="Ensembl" id="ENSMUST00000047170.10">
    <property type="protein sequence ID" value="ENSMUSP00000038091.4"/>
    <property type="gene ID" value="ENSMUSG00000040714.15"/>
</dbReference>
<dbReference type="Ensembl" id="ENSMUST00000108458.10">
    <property type="protein sequence ID" value="ENSMUSP00000104098.4"/>
    <property type="gene ID" value="ENSMUSG00000040714.15"/>
</dbReference>
<dbReference type="Ensembl" id="ENSMUST00000108459.9">
    <property type="protein sequence ID" value="ENSMUSP00000104099.3"/>
    <property type="gene ID" value="ENSMUSG00000040714.15"/>
</dbReference>
<dbReference type="GeneID" id="232943"/>
<dbReference type="KEGG" id="mmu:232943"/>
<dbReference type="UCSC" id="uc009fls.2">
    <property type="organism name" value="mouse"/>
</dbReference>
<dbReference type="AGR" id="MGI:1277971"/>
<dbReference type="CTD" id="147700"/>
<dbReference type="MGI" id="MGI:1277971">
    <property type="gene designation" value="Klc3"/>
</dbReference>
<dbReference type="VEuPathDB" id="HostDB:ENSMUSG00000040714"/>
<dbReference type="eggNOG" id="KOG1840">
    <property type="taxonomic scope" value="Eukaryota"/>
</dbReference>
<dbReference type="GeneTree" id="ENSGT00940000162356"/>
<dbReference type="InParanoid" id="Q91W40"/>
<dbReference type="OrthoDB" id="413723at2759"/>
<dbReference type="PhylomeDB" id="Q91W40"/>
<dbReference type="TreeFam" id="TF314010"/>
<dbReference type="Reactome" id="R-MMU-2132295">
    <property type="pathway name" value="MHC class II antigen presentation"/>
</dbReference>
<dbReference type="Reactome" id="R-MMU-5625970">
    <property type="pathway name" value="RHO GTPases activate KTN1"/>
</dbReference>
<dbReference type="Reactome" id="R-MMU-6811434">
    <property type="pathway name" value="COPI-dependent Golgi-to-ER retrograde traffic"/>
</dbReference>
<dbReference type="Reactome" id="R-MMU-983189">
    <property type="pathway name" value="Kinesins"/>
</dbReference>
<dbReference type="BioGRID-ORCS" id="232943">
    <property type="hits" value="4 hits in 81 CRISPR screens"/>
</dbReference>
<dbReference type="ChiTaRS" id="Klc3">
    <property type="organism name" value="mouse"/>
</dbReference>
<dbReference type="PRO" id="PR:Q91W40"/>
<dbReference type="Proteomes" id="UP000000589">
    <property type="component" value="Chromosome 7"/>
</dbReference>
<dbReference type="RNAct" id="Q91W40">
    <property type="molecule type" value="protein"/>
</dbReference>
<dbReference type="Bgee" id="ENSMUSG00000040714">
    <property type="expression patterns" value="Expressed in lip and 150 other cell types or tissues"/>
</dbReference>
<dbReference type="ExpressionAtlas" id="Q91W40">
    <property type="expression patterns" value="baseline and differential"/>
</dbReference>
<dbReference type="GO" id="GO:0035253">
    <property type="term" value="C:ciliary rootlet"/>
    <property type="evidence" value="ECO:0000314"/>
    <property type="project" value="MGI"/>
</dbReference>
<dbReference type="GO" id="GO:0005737">
    <property type="term" value="C:cytoplasm"/>
    <property type="evidence" value="ECO:0000314"/>
    <property type="project" value="MGI"/>
</dbReference>
<dbReference type="GO" id="GO:0005871">
    <property type="term" value="C:kinesin complex"/>
    <property type="evidence" value="ECO:0007669"/>
    <property type="project" value="InterPro"/>
</dbReference>
<dbReference type="GO" id="GO:0005874">
    <property type="term" value="C:microtubule"/>
    <property type="evidence" value="ECO:0007669"/>
    <property type="project" value="UniProtKB-KW"/>
</dbReference>
<dbReference type="GO" id="GO:0005739">
    <property type="term" value="C:mitochondrion"/>
    <property type="evidence" value="ECO:0000315"/>
    <property type="project" value="UniProtKB"/>
</dbReference>
<dbReference type="GO" id="GO:0031514">
    <property type="term" value="C:motile cilium"/>
    <property type="evidence" value="ECO:0000314"/>
    <property type="project" value="MGI"/>
</dbReference>
<dbReference type="GO" id="GO:0043005">
    <property type="term" value="C:neuron projection"/>
    <property type="evidence" value="ECO:0000314"/>
    <property type="project" value="MGI"/>
</dbReference>
<dbReference type="GO" id="GO:0019894">
    <property type="term" value="F:kinesin binding"/>
    <property type="evidence" value="ECO:0000314"/>
    <property type="project" value="MGI"/>
</dbReference>
<dbReference type="GO" id="GO:0008017">
    <property type="term" value="F:microtubule binding"/>
    <property type="evidence" value="ECO:0000314"/>
    <property type="project" value="MGI"/>
</dbReference>
<dbReference type="GO" id="GO:0008088">
    <property type="term" value="P:axo-dendritic transport"/>
    <property type="evidence" value="ECO:0000315"/>
    <property type="project" value="MGI"/>
</dbReference>
<dbReference type="GO" id="GO:0042073">
    <property type="term" value="P:intraciliary transport"/>
    <property type="evidence" value="ECO:0000304"/>
    <property type="project" value="MGI"/>
</dbReference>
<dbReference type="GO" id="GO:0120317">
    <property type="term" value="P:sperm mitochondrial sheath assembly"/>
    <property type="evidence" value="ECO:0000315"/>
    <property type="project" value="UniProtKB"/>
</dbReference>
<dbReference type="GO" id="GO:0007286">
    <property type="term" value="P:spermatid development"/>
    <property type="evidence" value="ECO:0000315"/>
    <property type="project" value="UniProtKB"/>
</dbReference>
<dbReference type="GO" id="GO:0007283">
    <property type="term" value="P:spermatogenesis"/>
    <property type="evidence" value="ECO:0000315"/>
    <property type="project" value="UniProtKB"/>
</dbReference>
<dbReference type="FunFam" id="1.25.40.10:FF:000003">
    <property type="entry name" value="kinesin light chain isoform X1"/>
    <property type="match status" value="1"/>
</dbReference>
<dbReference type="Gene3D" id="1.25.40.10">
    <property type="entry name" value="Tetratricopeptide repeat domain"/>
    <property type="match status" value="1"/>
</dbReference>
<dbReference type="InterPro" id="IPR002151">
    <property type="entry name" value="Kinesin_light"/>
</dbReference>
<dbReference type="InterPro" id="IPR011990">
    <property type="entry name" value="TPR-like_helical_dom_sf"/>
</dbReference>
<dbReference type="InterPro" id="IPR019734">
    <property type="entry name" value="TPR_rpt"/>
</dbReference>
<dbReference type="PANTHER" id="PTHR45783">
    <property type="entry name" value="KINESIN LIGHT CHAIN"/>
    <property type="match status" value="1"/>
</dbReference>
<dbReference type="PANTHER" id="PTHR45783:SF1">
    <property type="entry name" value="KINESIN LIGHT CHAIN 3"/>
    <property type="match status" value="1"/>
</dbReference>
<dbReference type="Pfam" id="PF13424">
    <property type="entry name" value="TPR_12"/>
    <property type="match status" value="2"/>
</dbReference>
<dbReference type="PRINTS" id="PR00381">
    <property type="entry name" value="KINESINLIGHT"/>
</dbReference>
<dbReference type="SMART" id="SM00028">
    <property type="entry name" value="TPR"/>
    <property type="match status" value="4"/>
</dbReference>
<dbReference type="SUPFAM" id="SSF48452">
    <property type="entry name" value="TPR-like"/>
    <property type="match status" value="1"/>
</dbReference>
<dbReference type="PROSITE" id="PS50005">
    <property type="entry name" value="TPR"/>
    <property type="match status" value="4"/>
</dbReference>
<dbReference type="PROSITE" id="PS50293">
    <property type="entry name" value="TPR_REGION"/>
    <property type="match status" value="1"/>
</dbReference>
<comment type="function">
    <text evidence="6">Kinesin is a microtubule-associated force-producing protein that may play a role in organelle transport. Plays a role during spermiogenesis in the development of the sperm tail midpiece and in the normal function of spermatozoa (PubMed:22561200). May play a role in the formation of the mitochondrial sheath formation in the developing spermatid midpiece (PubMed:22561200).</text>
</comment>
<comment type="subunit">
    <text evidence="1 6 7">Oligomer composed of two heavy chains and two light chains (By similarity). Associates with microtubulin in an ATP-dependent manner (By similarity). Interacts with KIF5C. Interacts with ODF1 (By similarity). Interacts with LRGUK (PubMed:28003339). Interacts with VDAC2 (PubMed:22561200).</text>
</comment>
<comment type="subcellular location">
    <subcellularLocation>
        <location evidence="7 10">Cytoplasm</location>
        <location evidence="7 10">Cytoskeleton</location>
    </subcellularLocation>
    <subcellularLocation>
        <location evidence="6">Mitochondrion</location>
    </subcellularLocation>
    <text evidence="1 7">In elongating spermatid tail midpiece, localized in outer dense fibers (ODFs) and associates with mitochondria (By similarity). Also localizes to the manchette in elongating spermatids (PubMed:28003339).</text>
</comment>
<comment type="tissue specificity">
    <text evidence="5 8">Expressed in postmeiotic male germ cells (at protein level) (PubMed:11319135). Expressed in the testes (at protein level) (PubMed:35547804). Expressed in spleen, intestine, brain and ovary (PubMed:11319135).</text>
</comment>
<comment type="domain">
    <text evidence="1">The heptad repeat (HR) motif is sufficient for interaction with kinesin heavy (KHL) chains and ODF1. The TPR region is involved in mitochondrial binding (By similarity).</text>
</comment>
<comment type="disruption phenotype">
    <text evidence="6">Male transgenic mice (expressing a KLC3 deletion mutant) display significantly reduced reproductive efficiency siring small sized litters (PubMed:22561200). Show significantly reduced sperm count, defective mitochondrial sheath structure in a number of spermatids and produce spermatozoa that exhibit abnormal motility parameters (PubMed:22561200).</text>
</comment>
<comment type="similarity">
    <text evidence="9">Belongs to the kinesin light chain family.</text>
</comment>
<reference key="1">
    <citation type="journal article" date="2005" name="Science">
        <title>The transcriptional landscape of the mammalian genome.</title>
        <authorList>
            <person name="Carninci P."/>
            <person name="Kasukawa T."/>
            <person name="Katayama S."/>
            <person name="Gough J."/>
            <person name="Frith M.C."/>
            <person name="Maeda N."/>
            <person name="Oyama R."/>
            <person name="Ravasi T."/>
            <person name="Lenhard B."/>
            <person name="Wells C."/>
            <person name="Kodzius R."/>
            <person name="Shimokawa K."/>
            <person name="Bajic V.B."/>
            <person name="Brenner S.E."/>
            <person name="Batalov S."/>
            <person name="Forrest A.R."/>
            <person name="Zavolan M."/>
            <person name="Davis M.J."/>
            <person name="Wilming L.G."/>
            <person name="Aidinis V."/>
            <person name="Allen J.E."/>
            <person name="Ambesi-Impiombato A."/>
            <person name="Apweiler R."/>
            <person name="Aturaliya R.N."/>
            <person name="Bailey T.L."/>
            <person name="Bansal M."/>
            <person name="Baxter L."/>
            <person name="Beisel K.W."/>
            <person name="Bersano T."/>
            <person name="Bono H."/>
            <person name="Chalk A.M."/>
            <person name="Chiu K.P."/>
            <person name="Choudhary V."/>
            <person name="Christoffels A."/>
            <person name="Clutterbuck D.R."/>
            <person name="Crowe M.L."/>
            <person name="Dalla E."/>
            <person name="Dalrymple B.P."/>
            <person name="de Bono B."/>
            <person name="Della Gatta G."/>
            <person name="di Bernardo D."/>
            <person name="Down T."/>
            <person name="Engstrom P."/>
            <person name="Fagiolini M."/>
            <person name="Faulkner G."/>
            <person name="Fletcher C.F."/>
            <person name="Fukushima T."/>
            <person name="Furuno M."/>
            <person name="Futaki S."/>
            <person name="Gariboldi M."/>
            <person name="Georgii-Hemming P."/>
            <person name="Gingeras T.R."/>
            <person name="Gojobori T."/>
            <person name="Green R.E."/>
            <person name="Gustincich S."/>
            <person name="Harbers M."/>
            <person name="Hayashi Y."/>
            <person name="Hensch T.K."/>
            <person name="Hirokawa N."/>
            <person name="Hill D."/>
            <person name="Huminiecki L."/>
            <person name="Iacono M."/>
            <person name="Ikeo K."/>
            <person name="Iwama A."/>
            <person name="Ishikawa T."/>
            <person name="Jakt M."/>
            <person name="Kanapin A."/>
            <person name="Katoh M."/>
            <person name="Kawasawa Y."/>
            <person name="Kelso J."/>
            <person name="Kitamura H."/>
            <person name="Kitano H."/>
            <person name="Kollias G."/>
            <person name="Krishnan S.P."/>
            <person name="Kruger A."/>
            <person name="Kummerfeld S.K."/>
            <person name="Kurochkin I.V."/>
            <person name="Lareau L.F."/>
            <person name="Lazarevic D."/>
            <person name="Lipovich L."/>
            <person name="Liu J."/>
            <person name="Liuni S."/>
            <person name="McWilliam S."/>
            <person name="Madan Babu M."/>
            <person name="Madera M."/>
            <person name="Marchionni L."/>
            <person name="Matsuda H."/>
            <person name="Matsuzawa S."/>
            <person name="Miki H."/>
            <person name="Mignone F."/>
            <person name="Miyake S."/>
            <person name="Morris K."/>
            <person name="Mottagui-Tabar S."/>
            <person name="Mulder N."/>
            <person name="Nakano N."/>
            <person name="Nakauchi H."/>
            <person name="Ng P."/>
            <person name="Nilsson R."/>
            <person name="Nishiguchi S."/>
            <person name="Nishikawa S."/>
            <person name="Nori F."/>
            <person name="Ohara O."/>
            <person name="Okazaki Y."/>
            <person name="Orlando V."/>
            <person name="Pang K.C."/>
            <person name="Pavan W.J."/>
            <person name="Pavesi G."/>
            <person name="Pesole G."/>
            <person name="Petrovsky N."/>
            <person name="Piazza S."/>
            <person name="Reed J."/>
            <person name="Reid J.F."/>
            <person name="Ring B.Z."/>
            <person name="Ringwald M."/>
            <person name="Rost B."/>
            <person name="Ruan Y."/>
            <person name="Salzberg S.L."/>
            <person name="Sandelin A."/>
            <person name="Schneider C."/>
            <person name="Schoenbach C."/>
            <person name="Sekiguchi K."/>
            <person name="Semple C.A."/>
            <person name="Seno S."/>
            <person name="Sessa L."/>
            <person name="Sheng Y."/>
            <person name="Shibata Y."/>
            <person name="Shimada H."/>
            <person name="Shimada K."/>
            <person name="Silva D."/>
            <person name="Sinclair B."/>
            <person name="Sperling S."/>
            <person name="Stupka E."/>
            <person name="Sugiura K."/>
            <person name="Sultana R."/>
            <person name="Takenaka Y."/>
            <person name="Taki K."/>
            <person name="Tammoja K."/>
            <person name="Tan S.L."/>
            <person name="Tang S."/>
            <person name="Taylor M.S."/>
            <person name="Tegner J."/>
            <person name="Teichmann S.A."/>
            <person name="Ueda H.R."/>
            <person name="van Nimwegen E."/>
            <person name="Verardo R."/>
            <person name="Wei C.L."/>
            <person name="Yagi K."/>
            <person name="Yamanishi H."/>
            <person name="Zabarovsky E."/>
            <person name="Zhu S."/>
            <person name="Zimmer A."/>
            <person name="Hide W."/>
            <person name="Bult C."/>
            <person name="Grimmond S.M."/>
            <person name="Teasdale R.D."/>
            <person name="Liu E.T."/>
            <person name="Brusic V."/>
            <person name="Quackenbush J."/>
            <person name="Wahlestedt C."/>
            <person name="Mattick J.S."/>
            <person name="Hume D.A."/>
            <person name="Kai C."/>
            <person name="Sasaki D."/>
            <person name="Tomaru Y."/>
            <person name="Fukuda S."/>
            <person name="Kanamori-Katayama M."/>
            <person name="Suzuki M."/>
            <person name="Aoki J."/>
            <person name="Arakawa T."/>
            <person name="Iida J."/>
            <person name="Imamura K."/>
            <person name="Itoh M."/>
            <person name="Kato T."/>
            <person name="Kawaji H."/>
            <person name="Kawagashira N."/>
            <person name="Kawashima T."/>
            <person name="Kojima M."/>
            <person name="Kondo S."/>
            <person name="Konno H."/>
            <person name="Nakano K."/>
            <person name="Ninomiya N."/>
            <person name="Nishio T."/>
            <person name="Okada M."/>
            <person name="Plessy C."/>
            <person name="Shibata K."/>
            <person name="Shiraki T."/>
            <person name="Suzuki S."/>
            <person name="Tagami M."/>
            <person name="Waki K."/>
            <person name="Watahiki A."/>
            <person name="Okamura-Oho Y."/>
            <person name="Suzuki H."/>
            <person name="Kawai J."/>
            <person name="Hayashizaki Y."/>
        </authorList>
    </citation>
    <scope>NUCLEOTIDE SEQUENCE [LARGE SCALE MRNA]</scope>
    <source>
        <strain>C57BL/6J</strain>
        <tissue>Inner ear</tissue>
    </source>
</reference>
<reference key="2">
    <citation type="journal article" date="2004" name="Genome Res.">
        <title>The status, quality, and expansion of the NIH full-length cDNA project: the Mammalian Gene Collection (MGC).</title>
        <authorList>
            <consortium name="The MGC Project Team"/>
        </authorList>
    </citation>
    <scope>NUCLEOTIDE SEQUENCE [LARGE SCALE MRNA]</scope>
    <source>
        <strain>C57BL/6J</strain>
        <tissue>Eye</tissue>
    </source>
</reference>
<reference key="3">
    <citation type="journal article" date="2001" name="Biol. Reprod.">
        <title>Kinesin light-chain KLC3 expression in testis is restricted to spermatids.</title>
        <authorList>
            <person name="Junco A."/>
            <person name="Bhullar B."/>
            <person name="Tarnasky H.A."/>
            <person name="van der Hoorn F.A."/>
        </authorList>
    </citation>
    <scope>SUBCELLULAR LOCATION</scope>
    <scope>TISSUE SPECIFICITY</scope>
    <source>
        <tissue>Testis</tissue>
    </source>
</reference>
<reference key="4">
    <citation type="journal article" date="2010" name="Cell">
        <title>A tissue-specific atlas of mouse protein phosphorylation and expression.</title>
        <authorList>
            <person name="Huttlin E.L."/>
            <person name="Jedrychowski M.P."/>
            <person name="Elias J.E."/>
            <person name="Goswami T."/>
            <person name="Rad R."/>
            <person name="Beausoleil S.A."/>
            <person name="Villen J."/>
            <person name="Haas W."/>
            <person name="Sowa M.E."/>
            <person name="Gygi S.P."/>
        </authorList>
    </citation>
    <scope>PHOSPHORYLATION [LARGE SCALE ANALYSIS] AT SER-173 AND SER-467</scope>
    <scope>IDENTIFICATION BY MASS SPECTROMETRY [LARGE SCALE ANALYSIS]</scope>
    <source>
        <tissue>Brain</tissue>
        <tissue>Brown adipose tissue</tissue>
        <tissue>Kidney</tissue>
        <tissue>Lung</tissue>
        <tissue>Pancreas</tissue>
        <tissue>Spleen</tissue>
    </source>
</reference>
<reference key="5">
    <citation type="journal article" date="2012" name="Dev. Biol.">
        <title>KLC3 is involved in sperm tail midpiece formation and sperm function.</title>
        <authorList>
            <person name="Zhang Y."/>
            <person name="Ou Y."/>
            <person name="Cheng M."/>
            <person name="Saadi H.S."/>
            <person name="Thundathil J.C."/>
            <person name="van der Hoorn F.A."/>
        </authorList>
    </citation>
    <scope>FUNCTION</scope>
    <scope>SUBCELLULAR LOCATION</scope>
    <scope>INTERACTION WITH VDAC2</scope>
    <scope>DISRUPTION PHENOTYPE</scope>
</reference>
<reference key="6">
    <citation type="journal article" date="2017" name="FASEB J.">
        <title>LRGUK1 is part of a multiprotein complex required for manchette function and male fertility.</title>
        <authorList>
            <person name="Okuda H."/>
            <person name="DeBoer K."/>
            <person name="O'Connor A.E."/>
            <person name="Merriner D.J."/>
            <person name="Jamsai D."/>
            <person name="O'Bryan M.K."/>
        </authorList>
    </citation>
    <scope>INTERACTION WITH LRGUK</scope>
    <scope>SUBCELLULAR LOCATION</scope>
</reference>
<reference key="7">
    <citation type="journal article" date="2022" name="Front. Cell Dev. Biol.">
        <title>TMPRSS12 Functions in Meiosis and Spermiogenesis and Is Required for Male Fertility in Mice.</title>
        <authorList>
            <person name="Zhang J."/>
            <person name="Zhou X."/>
            <person name="Wan D."/>
            <person name="Yu L."/>
            <person name="Chen X."/>
            <person name="Yan T."/>
            <person name="Wu Z."/>
            <person name="Zheng M."/>
            <person name="Zhu F."/>
            <person name="Zhu H."/>
        </authorList>
    </citation>
    <scope>TISSUE SPECIFICITY</scope>
</reference>
<organism>
    <name type="scientific">Mus musculus</name>
    <name type="common">Mouse</name>
    <dbReference type="NCBI Taxonomy" id="10090"/>
    <lineage>
        <taxon>Eukaryota</taxon>
        <taxon>Metazoa</taxon>
        <taxon>Chordata</taxon>
        <taxon>Craniata</taxon>
        <taxon>Vertebrata</taxon>
        <taxon>Euteleostomi</taxon>
        <taxon>Mammalia</taxon>
        <taxon>Eutheria</taxon>
        <taxon>Euarchontoglires</taxon>
        <taxon>Glires</taxon>
        <taxon>Rodentia</taxon>
        <taxon>Myomorpha</taxon>
        <taxon>Muroidea</taxon>
        <taxon>Muridae</taxon>
        <taxon>Murinae</taxon>
        <taxon>Mus</taxon>
        <taxon>Mus</taxon>
    </lineage>
</organism>
<gene>
    <name type="primary">Klc3</name>
</gene>
<name>KLC3_MOUSE</name>
<proteinExistence type="evidence at protein level"/>
<feature type="chain" id="PRO_0000230786" description="Kinesin light chain 3">
    <location>
        <begin position="1"/>
        <end position="508"/>
    </location>
</feature>
<feature type="repeat" description="TPR 1">
    <location>
        <begin position="207"/>
        <end position="240"/>
    </location>
</feature>
<feature type="repeat" description="TPR 2">
    <location>
        <begin position="249"/>
        <end position="282"/>
    </location>
</feature>
<feature type="repeat" description="TPR 3">
    <location>
        <begin position="291"/>
        <end position="324"/>
    </location>
</feature>
<feature type="repeat" description="TPR 4">
    <location>
        <begin position="333"/>
        <end position="366"/>
    </location>
</feature>
<feature type="repeat" description="TPR 5">
    <location>
        <begin position="375"/>
        <end position="408"/>
    </location>
</feature>
<feature type="region of interest" description="Disordered" evidence="4">
    <location>
        <begin position="1"/>
        <end position="20"/>
    </location>
</feature>
<feature type="region of interest" description="Disordered" evidence="4">
    <location>
        <begin position="154"/>
        <end position="197"/>
    </location>
</feature>
<feature type="region of interest" description="Disordered" evidence="4">
    <location>
        <begin position="409"/>
        <end position="441"/>
    </location>
</feature>
<feature type="region of interest" description="Disordered" evidence="4">
    <location>
        <begin position="486"/>
        <end position="508"/>
    </location>
</feature>
<feature type="coiled-coil region" evidence="3">
    <location>
        <begin position="88"/>
        <end position="150"/>
    </location>
</feature>
<feature type="compositionally biased region" description="Basic and acidic residues" evidence="4">
    <location>
        <begin position="161"/>
        <end position="173"/>
    </location>
</feature>
<feature type="compositionally biased region" description="Polar residues" evidence="4">
    <location>
        <begin position="420"/>
        <end position="434"/>
    </location>
</feature>
<feature type="compositionally biased region" description="Polar residues" evidence="4">
    <location>
        <begin position="498"/>
        <end position="508"/>
    </location>
</feature>
<feature type="modified residue" description="Phosphoserine" evidence="11">
    <location>
        <position position="173"/>
    </location>
</feature>
<feature type="modified residue" description="Phosphoserine" evidence="11">
    <location>
        <position position="467"/>
    </location>
</feature>
<feature type="modified residue" description="Phosphothreonine" evidence="2">
    <location>
        <position position="502"/>
    </location>
</feature>
<feature type="modified residue" description="Phosphoserine" evidence="2">
    <location>
        <position position="506"/>
    </location>
</feature>
<feature type="sequence conflict" description="In Ref. 1; BAE34354." evidence="9" ref="1">
    <original>L</original>
    <variation>P</variation>
    <location>
        <position position="313"/>
    </location>
</feature>
<evidence type="ECO:0000250" key="1">
    <source>
        <dbReference type="UniProtKB" id="Q68G30"/>
    </source>
</evidence>
<evidence type="ECO:0000250" key="2">
    <source>
        <dbReference type="UniProtKB" id="Q6P597"/>
    </source>
</evidence>
<evidence type="ECO:0000255" key="3"/>
<evidence type="ECO:0000256" key="4">
    <source>
        <dbReference type="SAM" id="MobiDB-lite"/>
    </source>
</evidence>
<evidence type="ECO:0000269" key="5">
    <source>
    </source>
</evidence>
<evidence type="ECO:0000269" key="6">
    <source>
    </source>
</evidence>
<evidence type="ECO:0000269" key="7">
    <source>
    </source>
</evidence>
<evidence type="ECO:0000269" key="8">
    <source>
    </source>
</evidence>
<evidence type="ECO:0000305" key="9"/>
<evidence type="ECO:0000305" key="10">
    <source>
    </source>
</evidence>
<evidence type="ECO:0007744" key="11">
    <source>
    </source>
</evidence>
<sequence>MSVQVAAPGSTGLGPERLNPEELVRQTRQVVQGLEALRAEHHSLAGHLAEALAGPGPVAGVELLEEKQQVVNHSLEAIELGLGEAQVLLALSAHVSVLEAEKQRLRAQARRLAQENTWLREELEETQRRLRASEEAVAQLEEEKSHLQFLGQLRQYDPPEESQRPESPPRRDSLASLFPSEEEEKKGPEAAGAAAAQQGGYEIPARLRTLHNLVIQYAGQGRYEVAVPLCRQALEDLERSSGHCHPDVATMLNILALVYRDQNKYKEATELLHDALQIREQTLGPEHPAVAATLNNLAVLYGKRGRYREAEPLCQRALEIREKVLGADHPDVAKQLNNLALLCQNQGKFQDVERHYARALSIYEALGGPQDPNVAKTKNNLASAYLKQNKYQQAEELYKEILSQEALPAPLGAPQGGTAGDTQQQVLRRSSSFSKLRESIRRGSEKLVSRLRGEGMAGAAGMKRAMSLNMLNVDGPRAARTQLSQLSTRHLSEAPRTLSISTQDLSPR</sequence>
<keyword id="KW-0175">Coiled coil</keyword>
<keyword id="KW-0963">Cytoplasm</keyword>
<keyword id="KW-0206">Cytoskeleton</keyword>
<keyword id="KW-0221">Differentiation</keyword>
<keyword id="KW-0493">Microtubule</keyword>
<keyword id="KW-0496">Mitochondrion</keyword>
<keyword id="KW-0505">Motor protein</keyword>
<keyword id="KW-0597">Phosphoprotein</keyword>
<keyword id="KW-1185">Reference proteome</keyword>
<keyword id="KW-0677">Repeat</keyword>
<keyword id="KW-0744">Spermatogenesis</keyword>
<keyword id="KW-0802">TPR repeat</keyword>